<protein>
    <recommendedName>
        <fullName>KS1 protein</fullName>
    </recommendedName>
    <alternativeName>
        <fullName>Head-specific protein 1</fullName>
    </alternativeName>
    <alternativeName>
        <fullName>Kopf-spezifisches protein 1</fullName>
    </alternativeName>
</protein>
<keyword id="KW-0217">Developmental protein</keyword>
<keyword id="KW-1185">Reference proteome</keyword>
<keyword id="KW-0677">Repeat</keyword>
<keyword id="KW-0732">Signal</keyword>
<name>KS1_HYDVU</name>
<evidence type="ECO:0000255" key="1"/>
<evidence type="ECO:0000256" key="2">
    <source>
        <dbReference type="SAM" id="MobiDB-lite"/>
    </source>
</evidence>
<feature type="signal peptide" evidence="1">
    <location>
        <begin position="1"/>
        <end position="16"/>
    </location>
</feature>
<feature type="chain" id="PRO_0000021570" description="KS1 protein">
    <location>
        <begin position="17"/>
        <end position="217"/>
    </location>
</feature>
<feature type="repeat" description="1">
    <location>
        <begin position="32"/>
        <end position="81"/>
    </location>
</feature>
<feature type="repeat" description="2">
    <location>
        <begin position="98"/>
        <end position="147"/>
    </location>
</feature>
<feature type="region of interest" description="Disordered" evidence="2">
    <location>
        <begin position="24"/>
        <end position="58"/>
    </location>
</feature>
<feature type="region of interest" description="2 X 50 AA approximate repeats">
    <location>
        <begin position="32"/>
        <end position="147"/>
    </location>
</feature>
<feature type="region of interest" description="Disordered" evidence="2">
    <location>
        <begin position="72"/>
        <end position="205"/>
    </location>
</feature>
<feature type="compositionally biased region" description="Basic and acidic residues" evidence="2">
    <location>
        <begin position="24"/>
        <end position="47"/>
    </location>
</feature>
<feature type="compositionally biased region" description="Acidic residues" evidence="2">
    <location>
        <begin position="48"/>
        <end position="58"/>
    </location>
</feature>
<feature type="compositionally biased region" description="Acidic residues" evidence="2">
    <location>
        <begin position="72"/>
        <end position="94"/>
    </location>
</feature>
<feature type="compositionally biased region" description="Basic residues" evidence="2">
    <location>
        <begin position="98"/>
        <end position="110"/>
    </location>
</feature>
<feature type="compositionally biased region" description="Acidic residues" evidence="2">
    <location>
        <begin position="114"/>
        <end position="145"/>
    </location>
</feature>
<feature type="compositionally biased region" description="Basic residues" evidence="2">
    <location>
        <begin position="149"/>
        <end position="188"/>
    </location>
</feature>
<reference key="1">
    <citation type="journal article" date="1994" name="Development">
        <title>Ks1, an epithelial cell-specific gene, responds to early signals of head formation in Hydra.</title>
        <authorList>
            <person name="Weinziger R."/>
            <person name="Salgado L.M."/>
            <person name="David C.N."/>
            <person name="Bosch T.C.G."/>
        </authorList>
    </citation>
    <scope>NUCLEOTIDE SEQUENCE [MRNA]</scope>
</reference>
<accession>P38978</accession>
<sequence>MKLIIVLVMMLVCVYSMSIEKNIPKNHEVPAKKQFAETKVEKKKRSDDGDEEICDDDDEDCEDVVDIEECNEDDDDCVDGGETEECDEDDDDCQEEKKKKKRETKPKLKKRNDDEEEEECEEDDEDCEVEVDIEECDEEDDDCYDEDKKKKKENKLKKESKKKNSKKTVPKNAKKSSKRSTSTKKTSQKKQQDKRGAIQKNLKIKEANFKKKFNLNF</sequence>
<comment type="function">
    <text>Responds to early signals of head formation in hydra.</text>
</comment>
<comment type="tissue specificity">
    <text>Expressed in tentacle-specific epithelial cells (battery cells) as well as in a small fraction of ectodermal epithelial cells in the gastric region subjacent to the tentacles (the tentacle formation region). The later cells are committed to become battery cells.</text>
</comment>
<comment type="induction">
    <text>By PKC.</text>
</comment>
<gene>
    <name type="primary">KS1</name>
</gene>
<dbReference type="EMBL" id="X78596">
    <property type="protein sequence ID" value="CAA55331.1"/>
    <property type="molecule type" value="mRNA"/>
</dbReference>
<dbReference type="PIR" id="S43193">
    <property type="entry name" value="S43193"/>
</dbReference>
<dbReference type="Proteomes" id="UP000694840">
    <property type="component" value="Unplaced"/>
</dbReference>
<proteinExistence type="evidence at transcript level"/>
<organism>
    <name type="scientific">Hydra vulgaris</name>
    <name type="common">Hydra</name>
    <name type="synonym">Hydra attenuata</name>
    <dbReference type="NCBI Taxonomy" id="6087"/>
    <lineage>
        <taxon>Eukaryota</taxon>
        <taxon>Metazoa</taxon>
        <taxon>Cnidaria</taxon>
        <taxon>Hydrozoa</taxon>
        <taxon>Hydroidolina</taxon>
        <taxon>Anthoathecata</taxon>
        <taxon>Aplanulata</taxon>
        <taxon>Hydridae</taxon>
        <taxon>Hydra</taxon>
    </lineage>
</organism>